<sequence length="231" mass="24055">MDARQMKIKAAEAALEHVESGMRLGIGTGSTAEEFVRLLAEKVASGFQISGVPTSERTARLCLELGVPLKSLDELPELDLTIDGADEVDGKLRLIKGGGGALLREKIVASASTRMIVIADESKVVDVLGAFKLPIEINPFGQVATRLAIEKTASRLGLAGEIVVRSSGDGVFMTDGGHLILDASFGRIPDADALAVELNAIPGVVEHGLFIDVASMAIIAGPEGARTLTAS</sequence>
<proteinExistence type="inferred from homology"/>
<reference key="1">
    <citation type="journal article" date="2001" name="Proc. Natl. Acad. Sci. U.S.A.">
        <title>Analysis of the chromosome sequence of the legume symbiont Sinorhizobium meliloti strain 1021.</title>
        <authorList>
            <person name="Capela D."/>
            <person name="Barloy-Hubler F."/>
            <person name="Gouzy J."/>
            <person name="Bothe G."/>
            <person name="Ampe F."/>
            <person name="Batut J."/>
            <person name="Boistard P."/>
            <person name="Becker A."/>
            <person name="Boutry M."/>
            <person name="Cadieu E."/>
            <person name="Dreano S."/>
            <person name="Gloux S."/>
            <person name="Godrie T."/>
            <person name="Goffeau A."/>
            <person name="Kahn D."/>
            <person name="Kiss E."/>
            <person name="Lelaure V."/>
            <person name="Masuy D."/>
            <person name="Pohl T."/>
            <person name="Portetelle D."/>
            <person name="Puehler A."/>
            <person name="Purnelle B."/>
            <person name="Ramsperger U."/>
            <person name="Renard C."/>
            <person name="Thebault P."/>
            <person name="Vandenbol M."/>
            <person name="Weidner S."/>
            <person name="Galibert F."/>
        </authorList>
    </citation>
    <scope>NUCLEOTIDE SEQUENCE [LARGE SCALE GENOMIC DNA]</scope>
    <source>
        <strain>1021</strain>
    </source>
</reference>
<reference key="2">
    <citation type="journal article" date="2001" name="Science">
        <title>The composite genome of the legume symbiont Sinorhizobium meliloti.</title>
        <authorList>
            <person name="Galibert F."/>
            <person name="Finan T.M."/>
            <person name="Long S.R."/>
            <person name="Puehler A."/>
            <person name="Abola P."/>
            <person name="Ampe F."/>
            <person name="Barloy-Hubler F."/>
            <person name="Barnett M.J."/>
            <person name="Becker A."/>
            <person name="Boistard P."/>
            <person name="Bothe G."/>
            <person name="Boutry M."/>
            <person name="Bowser L."/>
            <person name="Buhrmester J."/>
            <person name="Cadieu E."/>
            <person name="Capela D."/>
            <person name="Chain P."/>
            <person name="Cowie A."/>
            <person name="Davis R.W."/>
            <person name="Dreano S."/>
            <person name="Federspiel N.A."/>
            <person name="Fisher R.F."/>
            <person name="Gloux S."/>
            <person name="Godrie T."/>
            <person name="Goffeau A."/>
            <person name="Golding B."/>
            <person name="Gouzy J."/>
            <person name="Gurjal M."/>
            <person name="Hernandez-Lucas I."/>
            <person name="Hong A."/>
            <person name="Huizar L."/>
            <person name="Hyman R.W."/>
            <person name="Jones T."/>
            <person name="Kahn D."/>
            <person name="Kahn M.L."/>
            <person name="Kalman S."/>
            <person name="Keating D.H."/>
            <person name="Kiss E."/>
            <person name="Komp C."/>
            <person name="Lelaure V."/>
            <person name="Masuy D."/>
            <person name="Palm C."/>
            <person name="Peck M.C."/>
            <person name="Pohl T.M."/>
            <person name="Portetelle D."/>
            <person name="Purnelle B."/>
            <person name="Ramsperger U."/>
            <person name="Surzycki R."/>
            <person name="Thebault P."/>
            <person name="Vandenbol M."/>
            <person name="Vorhoelter F.J."/>
            <person name="Weidner S."/>
            <person name="Wells D.H."/>
            <person name="Wong K."/>
            <person name="Yeh K.-C."/>
            <person name="Batut J."/>
        </authorList>
    </citation>
    <scope>NUCLEOTIDE SEQUENCE [LARGE SCALE GENOMIC DNA]</scope>
    <source>
        <strain>1021</strain>
    </source>
</reference>
<protein>
    <recommendedName>
        <fullName evidence="1">Ribose-5-phosphate isomerase A</fullName>
        <ecNumber evidence="1">5.3.1.6</ecNumber>
    </recommendedName>
    <alternativeName>
        <fullName evidence="1">Phosphoriboisomerase A</fullName>
        <shortName evidence="1">PRI</shortName>
    </alternativeName>
</protein>
<name>RPIA_RHIME</name>
<keyword id="KW-0413">Isomerase</keyword>
<keyword id="KW-1185">Reference proteome</keyword>
<comment type="function">
    <text evidence="1">Catalyzes the reversible conversion of ribose-5-phosphate to ribulose 5-phosphate.</text>
</comment>
<comment type="catalytic activity">
    <reaction evidence="1">
        <text>aldehydo-D-ribose 5-phosphate = D-ribulose 5-phosphate</text>
        <dbReference type="Rhea" id="RHEA:14657"/>
        <dbReference type="ChEBI" id="CHEBI:58121"/>
        <dbReference type="ChEBI" id="CHEBI:58273"/>
        <dbReference type="EC" id="5.3.1.6"/>
    </reaction>
</comment>
<comment type="pathway">
    <text evidence="1">Carbohydrate degradation; pentose phosphate pathway; D-ribose 5-phosphate from D-ribulose 5-phosphate (non-oxidative stage): step 1/1.</text>
</comment>
<comment type="subunit">
    <text evidence="1">Homodimer.</text>
</comment>
<comment type="similarity">
    <text evidence="1">Belongs to the ribose 5-phosphate isomerase family.</text>
</comment>
<accession>Q92PB8</accession>
<gene>
    <name evidence="1" type="primary">rpiA</name>
    <name type="ordered locus">R01856</name>
    <name type="ORF">SMc00152</name>
</gene>
<organism>
    <name type="scientific">Rhizobium meliloti (strain 1021)</name>
    <name type="common">Ensifer meliloti</name>
    <name type="synonym">Sinorhizobium meliloti</name>
    <dbReference type="NCBI Taxonomy" id="266834"/>
    <lineage>
        <taxon>Bacteria</taxon>
        <taxon>Pseudomonadati</taxon>
        <taxon>Pseudomonadota</taxon>
        <taxon>Alphaproteobacteria</taxon>
        <taxon>Hyphomicrobiales</taxon>
        <taxon>Rhizobiaceae</taxon>
        <taxon>Sinorhizobium/Ensifer group</taxon>
        <taxon>Sinorhizobium</taxon>
    </lineage>
</organism>
<dbReference type="EC" id="5.3.1.6" evidence="1"/>
<dbReference type="EMBL" id="AL591688">
    <property type="protein sequence ID" value="CAC46435.1"/>
    <property type="molecule type" value="Genomic_DNA"/>
</dbReference>
<dbReference type="RefSeq" id="NP_385962.1">
    <property type="nucleotide sequence ID" value="NC_003047.1"/>
</dbReference>
<dbReference type="RefSeq" id="WP_003535076.1">
    <property type="nucleotide sequence ID" value="NC_003047.1"/>
</dbReference>
<dbReference type="SMR" id="Q92PB8"/>
<dbReference type="EnsemblBacteria" id="CAC46435">
    <property type="protein sequence ID" value="CAC46435"/>
    <property type="gene ID" value="SMc00152"/>
</dbReference>
<dbReference type="GeneID" id="89576192"/>
<dbReference type="KEGG" id="sme:SMc00152"/>
<dbReference type="PATRIC" id="fig|266834.11.peg.3299"/>
<dbReference type="eggNOG" id="COG0120">
    <property type="taxonomic scope" value="Bacteria"/>
</dbReference>
<dbReference type="HOGENOM" id="CLU_056590_1_0_5"/>
<dbReference type="OrthoDB" id="5870696at2"/>
<dbReference type="UniPathway" id="UPA00115">
    <property type="reaction ID" value="UER00412"/>
</dbReference>
<dbReference type="Proteomes" id="UP000001976">
    <property type="component" value="Chromosome"/>
</dbReference>
<dbReference type="GO" id="GO:0004751">
    <property type="term" value="F:ribose-5-phosphate isomerase activity"/>
    <property type="evidence" value="ECO:0007669"/>
    <property type="project" value="UniProtKB-UniRule"/>
</dbReference>
<dbReference type="GO" id="GO:0009052">
    <property type="term" value="P:pentose-phosphate shunt, non-oxidative branch"/>
    <property type="evidence" value="ECO:0007669"/>
    <property type="project" value="UniProtKB-UniRule"/>
</dbReference>
<dbReference type="CDD" id="cd01398">
    <property type="entry name" value="RPI_A"/>
    <property type="match status" value="1"/>
</dbReference>
<dbReference type="FunFam" id="3.40.50.1360:FF:000001">
    <property type="entry name" value="Ribose-5-phosphate isomerase A"/>
    <property type="match status" value="1"/>
</dbReference>
<dbReference type="Gene3D" id="3.30.70.260">
    <property type="match status" value="1"/>
</dbReference>
<dbReference type="Gene3D" id="3.40.50.1360">
    <property type="match status" value="1"/>
</dbReference>
<dbReference type="HAMAP" id="MF_00170">
    <property type="entry name" value="Rib_5P_isom_A"/>
    <property type="match status" value="1"/>
</dbReference>
<dbReference type="InterPro" id="IPR037171">
    <property type="entry name" value="NagB/RpiA_transferase-like"/>
</dbReference>
<dbReference type="InterPro" id="IPR050262">
    <property type="entry name" value="Ribose-5P_isomerase"/>
</dbReference>
<dbReference type="InterPro" id="IPR020672">
    <property type="entry name" value="Ribose5P_isomerase_typA_subgr"/>
</dbReference>
<dbReference type="InterPro" id="IPR004788">
    <property type="entry name" value="Ribose5P_isomerase_type_A"/>
</dbReference>
<dbReference type="NCBIfam" id="NF001924">
    <property type="entry name" value="PRK00702.1"/>
    <property type="match status" value="1"/>
</dbReference>
<dbReference type="NCBIfam" id="TIGR00021">
    <property type="entry name" value="rpiA"/>
    <property type="match status" value="1"/>
</dbReference>
<dbReference type="PANTHER" id="PTHR43748">
    <property type="entry name" value="RIBOSE-5-PHOSPHATE ISOMERASE 3, CHLOROPLASTIC-RELATED"/>
    <property type="match status" value="1"/>
</dbReference>
<dbReference type="PANTHER" id="PTHR43748:SF3">
    <property type="entry name" value="RIBOSE-5-PHOSPHATE ISOMERASE 3, CHLOROPLASTIC-RELATED"/>
    <property type="match status" value="1"/>
</dbReference>
<dbReference type="Pfam" id="PF06026">
    <property type="entry name" value="Rib_5-P_isom_A"/>
    <property type="match status" value="1"/>
</dbReference>
<dbReference type="SUPFAM" id="SSF75445">
    <property type="entry name" value="D-ribose-5-phosphate isomerase (RpiA), lid domain"/>
    <property type="match status" value="1"/>
</dbReference>
<dbReference type="SUPFAM" id="SSF100950">
    <property type="entry name" value="NagB/RpiA/CoA transferase-like"/>
    <property type="match status" value="1"/>
</dbReference>
<feature type="chain" id="PRO_0000158455" description="Ribose-5-phosphate isomerase A">
    <location>
        <begin position="1"/>
        <end position="231"/>
    </location>
</feature>
<feature type="active site" description="Proton acceptor" evidence="1">
    <location>
        <position position="105"/>
    </location>
</feature>
<feature type="binding site" evidence="1">
    <location>
        <begin position="28"/>
        <end position="31"/>
    </location>
    <ligand>
        <name>substrate</name>
    </ligand>
</feature>
<feature type="binding site" evidence="1">
    <location>
        <begin position="83"/>
        <end position="86"/>
    </location>
    <ligand>
        <name>substrate</name>
    </ligand>
</feature>
<feature type="binding site" evidence="1">
    <location>
        <begin position="96"/>
        <end position="99"/>
    </location>
    <ligand>
        <name>substrate</name>
    </ligand>
</feature>
<feature type="binding site" evidence="1">
    <location>
        <position position="123"/>
    </location>
    <ligand>
        <name>substrate</name>
    </ligand>
</feature>
<evidence type="ECO:0000255" key="1">
    <source>
        <dbReference type="HAMAP-Rule" id="MF_00170"/>
    </source>
</evidence>